<evidence type="ECO:0000255" key="1">
    <source>
        <dbReference type="HAMAP-Rule" id="MF_01322"/>
    </source>
</evidence>
<name>RPOC_LACLM</name>
<organism>
    <name type="scientific">Lactococcus lactis subsp. cremoris (strain MG1363)</name>
    <dbReference type="NCBI Taxonomy" id="416870"/>
    <lineage>
        <taxon>Bacteria</taxon>
        <taxon>Bacillati</taxon>
        <taxon>Bacillota</taxon>
        <taxon>Bacilli</taxon>
        <taxon>Lactobacillales</taxon>
        <taxon>Streptococcaceae</taxon>
        <taxon>Lactococcus</taxon>
        <taxon>Lactococcus cremoris subsp. cremoris</taxon>
    </lineage>
</organism>
<protein>
    <recommendedName>
        <fullName evidence="1">DNA-directed RNA polymerase subunit beta'</fullName>
        <shortName evidence="1">RNAP subunit beta'</shortName>
        <ecNumber evidence="1">2.7.7.6</ecNumber>
    </recommendedName>
    <alternativeName>
        <fullName evidence="1">RNA polymerase subunit beta'</fullName>
    </alternativeName>
    <alternativeName>
        <fullName evidence="1">Transcriptase subunit beta'</fullName>
    </alternativeName>
</protein>
<keyword id="KW-0240">DNA-directed RNA polymerase</keyword>
<keyword id="KW-0460">Magnesium</keyword>
<keyword id="KW-0479">Metal-binding</keyword>
<keyword id="KW-0548">Nucleotidyltransferase</keyword>
<keyword id="KW-0804">Transcription</keyword>
<keyword id="KW-0808">Transferase</keyword>
<keyword id="KW-0862">Zinc</keyword>
<comment type="function">
    <text evidence="1">DNA-dependent RNA polymerase catalyzes the transcription of DNA into RNA using the four ribonucleoside triphosphates as substrates.</text>
</comment>
<comment type="catalytic activity">
    <reaction evidence="1">
        <text>RNA(n) + a ribonucleoside 5'-triphosphate = RNA(n+1) + diphosphate</text>
        <dbReference type="Rhea" id="RHEA:21248"/>
        <dbReference type="Rhea" id="RHEA-COMP:14527"/>
        <dbReference type="Rhea" id="RHEA-COMP:17342"/>
        <dbReference type="ChEBI" id="CHEBI:33019"/>
        <dbReference type="ChEBI" id="CHEBI:61557"/>
        <dbReference type="ChEBI" id="CHEBI:140395"/>
        <dbReference type="EC" id="2.7.7.6"/>
    </reaction>
</comment>
<comment type="cofactor">
    <cofactor evidence="1">
        <name>Mg(2+)</name>
        <dbReference type="ChEBI" id="CHEBI:18420"/>
    </cofactor>
    <text evidence="1">Binds 1 Mg(2+) ion per subunit.</text>
</comment>
<comment type="cofactor">
    <cofactor evidence="1">
        <name>Zn(2+)</name>
        <dbReference type="ChEBI" id="CHEBI:29105"/>
    </cofactor>
    <text evidence="1">Binds 2 Zn(2+) ions per subunit.</text>
</comment>
<comment type="subunit">
    <text evidence="1">The RNAP catalytic core consists of 2 alpha, 1 beta, 1 beta' and 1 omega subunit. When a sigma factor is associated with the core the holoenzyme is formed, which can initiate transcription.</text>
</comment>
<comment type="similarity">
    <text evidence="1">Belongs to the RNA polymerase beta' chain family.</text>
</comment>
<proteinExistence type="inferred from homology"/>
<sequence length="1207" mass="134775">MVDVNKFESMRIGIASPQKIRYWSFGEVKKPETINYRTQKPEREGLFDERIFGPQKDWECACGKLKGVFYKNQVCELCGVQVTTAKSRRERMGHIELAAPISHIWYFKGIPSRMGLALDMSPRALEEVIYFASYVVIDPKETDLEKKQLLTEREYREQLLKNGFGSFVAKMGAEAIQDLLNDVDIDKEVAELKEELKTVTGQRRVKIIRRLDVLSAFRKSGNALSWMVLNVLPVIPPDLRPMVQLDGGRFATSDLNDLYRRVINRNNRLKRLMELNAPNIIVQNEKRMLQEAVDTLIDNGRRGRPITGAGNRPLKSLSHMLKGKQGRFRQNLLGKRVDYSGRSVIAVGPTLKMYQCGVPREMAIELFKPFVMAQLVKKELAANIRAAKRKVERQDSDVWDVLETVVKEHPVLLNRAPTLHRLGIQAFEPVLIDGKAIRLHPLACEAYNADFDGDQMAIHLPLSEEAQAEARLLMLAAEHILNPKDGKPVVTPSQDMVLGNYYLTMEEKGREGEGMIFATPEEVEIAMRNGYVHLHTRIGIATKSLNKPWTENQQDKILVTTVGKVIFNSIIPEGMPYLNEPTDVNLTTSTDDRFFMDAGQNIKEVLAGIDTVRPFKKGYLGNIIAEVFKRYRTTATSEYLDRLKDLGYHQSTLAGLTVGIADIPVVEDKHEIIDAAHKRVEQITKQFRRGLITDDERYNAVTGVWRDAKESLEKRLIEEQDLTNPIVMMMDSGARGNISNFSQLAGMRGLMAAPNGKIMELPIISNFREGLSVLEMFFSTHGARKGMTDTALKTADSGYLTRRLVDVAQDVIIREDDCGTDRGLVIADIATGKEMVEPLFERLVGRYTRKSVLHPETGEMIIGDDTLISEDIARKIIEADVKEVTIRSVFTCKTPHGVCKHCYGINLATGDAVEVGEAVGTIAAQSIGEPGTQLTMRTFHTGGVASSSDITQGLPRVQEIFEARNPKGEAIITEVTGTVESIVEDGATRTREITVKGKTDTRSYTVGMADVLMVEEGEFIHRGAPLIQGSIEPKHLLQVRDALSVETYLLGEVQKTYRSQGVEIGDKHIEVMIRQMLRKVRIMDNGSTDVLPGTLMDISDFEALNETALLNGEMPATGRPVLMGITKASLETNSFLSAASFQETTRVLTDAAIRGKEDHLLGLKENVIIGKIIPAGTGMFRYRNIEPLADLTNAPEVKEVETETVEN</sequence>
<reference key="1">
    <citation type="journal article" date="2007" name="J. Bacteriol.">
        <title>The complete genome sequence of the lactic acid bacterial paradigm Lactococcus lactis subsp. cremoris MG1363.</title>
        <authorList>
            <person name="Wegmann U."/>
            <person name="O'Connell-Motherway M."/>
            <person name="Zomer A."/>
            <person name="Buist G."/>
            <person name="Shearman C."/>
            <person name="Canchaya C."/>
            <person name="Ventura M."/>
            <person name="Goesmann A."/>
            <person name="Gasson M.J."/>
            <person name="Kuipers O.P."/>
            <person name="van Sinderen D."/>
            <person name="Kok J."/>
        </authorList>
    </citation>
    <scope>NUCLEOTIDE SEQUENCE [LARGE SCALE GENOMIC DNA]</scope>
    <source>
        <strain>MG1363</strain>
    </source>
</reference>
<gene>
    <name evidence="1" type="primary">rpoC</name>
    <name type="ordered locus">llmg_1981</name>
</gene>
<dbReference type="EC" id="2.7.7.6" evidence="1"/>
<dbReference type="EMBL" id="AM406671">
    <property type="protein sequence ID" value="CAL98552.1"/>
    <property type="molecule type" value="Genomic_DNA"/>
</dbReference>
<dbReference type="RefSeq" id="WP_011835717.1">
    <property type="nucleotide sequence ID" value="NC_009004.1"/>
</dbReference>
<dbReference type="SMR" id="A2RML8"/>
<dbReference type="STRING" id="416870.llmg_1981"/>
<dbReference type="KEGG" id="llm:llmg_1981"/>
<dbReference type="eggNOG" id="COG0086">
    <property type="taxonomic scope" value="Bacteria"/>
</dbReference>
<dbReference type="HOGENOM" id="CLU_000524_3_1_9"/>
<dbReference type="PhylomeDB" id="A2RML8"/>
<dbReference type="Proteomes" id="UP000000364">
    <property type="component" value="Chromosome"/>
</dbReference>
<dbReference type="GO" id="GO:0000428">
    <property type="term" value="C:DNA-directed RNA polymerase complex"/>
    <property type="evidence" value="ECO:0007669"/>
    <property type="project" value="UniProtKB-KW"/>
</dbReference>
<dbReference type="GO" id="GO:0003677">
    <property type="term" value="F:DNA binding"/>
    <property type="evidence" value="ECO:0007669"/>
    <property type="project" value="UniProtKB-UniRule"/>
</dbReference>
<dbReference type="GO" id="GO:0003899">
    <property type="term" value="F:DNA-directed RNA polymerase activity"/>
    <property type="evidence" value="ECO:0007669"/>
    <property type="project" value="UniProtKB-UniRule"/>
</dbReference>
<dbReference type="GO" id="GO:0000287">
    <property type="term" value="F:magnesium ion binding"/>
    <property type="evidence" value="ECO:0007669"/>
    <property type="project" value="UniProtKB-UniRule"/>
</dbReference>
<dbReference type="GO" id="GO:0008270">
    <property type="term" value="F:zinc ion binding"/>
    <property type="evidence" value="ECO:0007669"/>
    <property type="project" value="UniProtKB-UniRule"/>
</dbReference>
<dbReference type="GO" id="GO:0006351">
    <property type="term" value="P:DNA-templated transcription"/>
    <property type="evidence" value="ECO:0007669"/>
    <property type="project" value="UniProtKB-UniRule"/>
</dbReference>
<dbReference type="CDD" id="cd02655">
    <property type="entry name" value="RNAP_beta'_C"/>
    <property type="match status" value="1"/>
</dbReference>
<dbReference type="CDD" id="cd01609">
    <property type="entry name" value="RNAP_beta'_N"/>
    <property type="match status" value="1"/>
</dbReference>
<dbReference type="FunFam" id="1.10.150.390:FF:000002">
    <property type="entry name" value="DNA-directed RNA polymerase subunit beta"/>
    <property type="match status" value="1"/>
</dbReference>
<dbReference type="Gene3D" id="1.10.132.30">
    <property type="match status" value="1"/>
</dbReference>
<dbReference type="Gene3D" id="1.10.150.390">
    <property type="match status" value="1"/>
</dbReference>
<dbReference type="Gene3D" id="1.10.1790.20">
    <property type="match status" value="1"/>
</dbReference>
<dbReference type="Gene3D" id="1.10.40.90">
    <property type="match status" value="1"/>
</dbReference>
<dbReference type="Gene3D" id="2.40.40.20">
    <property type="match status" value="1"/>
</dbReference>
<dbReference type="Gene3D" id="2.40.50.100">
    <property type="match status" value="1"/>
</dbReference>
<dbReference type="Gene3D" id="4.10.860.120">
    <property type="entry name" value="RNA polymerase II, clamp domain"/>
    <property type="match status" value="1"/>
</dbReference>
<dbReference type="Gene3D" id="1.10.274.100">
    <property type="entry name" value="RNA polymerase Rpb1, domain 3"/>
    <property type="match status" value="1"/>
</dbReference>
<dbReference type="HAMAP" id="MF_01322">
    <property type="entry name" value="RNApol_bact_RpoC"/>
    <property type="match status" value="1"/>
</dbReference>
<dbReference type="InterPro" id="IPR045867">
    <property type="entry name" value="DNA-dir_RpoC_beta_prime"/>
</dbReference>
<dbReference type="InterPro" id="IPR012754">
    <property type="entry name" value="DNA-dir_RpoC_beta_prime_bact"/>
</dbReference>
<dbReference type="InterPro" id="IPR000722">
    <property type="entry name" value="RNA_pol_asu"/>
</dbReference>
<dbReference type="InterPro" id="IPR006592">
    <property type="entry name" value="RNA_pol_N"/>
</dbReference>
<dbReference type="InterPro" id="IPR007080">
    <property type="entry name" value="RNA_pol_Rpb1_1"/>
</dbReference>
<dbReference type="InterPro" id="IPR007066">
    <property type="entry name" value="RNA_pol_Rpb1_3"/>
</dbReference>
<dbReference type="InterPro" id="IPR042102">
    <property type="entry name" value="RNA_pol_Rpb1_3_sf"/>
</dbReference>
<dbReference type="InterPro" id="IPR007083">
    <property type="entry name" value="RNA_pol_Rpb1_4"/>
</dbReference>
<dbReference type="InterPro" id="IPR007081">
    <property type="entry name" value="RNA_pol_Rpb1_5"/>
</dbReference>
<dbReference type="InterPro" id="IPR044893">
    <property type="entry name" value="RNA_pol_Rpb1_clamp_domain"/>
</dbReference>
<dbReference type="InterPro" id="IPR038120">
    <property type="entry name" value="Rpb1_funnel_sf"/>
</dbReference>
<dbReference type="NCBIfam" id="TIGR02386">
    <property type="entry name" value="rpoC_TIGR"/>
    <property type="match status" value="1"/>
</dbReference>
<dbReference type="PANTHER" id="PTHR19376">
    <property type="entry name" value="DNA-DIRECTED RNA POLYMERASE"/>
    <property type="match status" value="1"/>
</dbReference>
<dbReference type="PANTHER" id="PTHR19376:SF54">
    <property type="entry name" value="DNA-DIRECTED RNA POLYMERASE SUBUNIT BETA"/>
    <property type="match status" value="1"/>
</dbReference>
<dbReference type="Pfam" id="PF04997">
    <property type="entry name" value="RNA_pol_Rpb1_1"/>
    <property type="match status" value="1"/>
</dbReference>
<dbReference type="Pfam" id="PF00623">
    <property type="entry name" value="RNA_pol_Rpb1_2"/>
    <property type="match status" value="1"/>
</dbReference>
<dbReference type="Pfam" id="PF04983">
    <property type="entry name" value="RNA_pol_Rpb1_3"/>
    <property type="match status" value="1"/>
</dbReference>
<dbReference type="Pfam" id="PF05000">
    <property type="entry name" value="RNA_pol_Rpb1_4"/>
    <property type="match status" value="1"/>
</dbReference>
<dbReference type="Pfam" id="PF04998">
    <property type="entry name" value="RNA_pol_Rpb1_5"/>
    <property type="match status" value="1"/>
</dbReference>
<dbReference type="SMART" id="SM00663">
    <property type="entry name" value="RPOLA_N"/>
    <property type="match status" value="1"/>
</dbReference>
<dbReference type="SUPFAM" id="SSF64484">
    <property type="entry name" value="beta and beta-prime subunits of DNA dependent RNA-polymerase"/>
    <property type="match status" value="1"/>
</dbReference>
<feature type="chain" id="PRO_0000308845" description="DNA-directed RNA polymerase subunit beta'">
    <location>
        <begin position="1"/>
        <end position="1207"/>
    </location>
</feature>
<feature type="binding site" evidence="1">
    <location>
        <position position="60"/>
    </location>
    <ligand>
        <name>Zn(2+)</name>
        <dbReference type="ChEBI" id="CHEBI:29105"/>
        <label>1</label>
    </ligand>
</feature>
<feature type="binding site" evidence="1">
    <location>
        <position position="62"/>
    </location>
    <ligand>
        <name>Zn(2+)</name>
        <dbReference type="ChEBI" id="CHEBI:29105"/>
        <label>1</label>
    </ligand>
</feature>
<feature type="binding site" evidence="1">
    <location>
        <position position="75"/>
    </location>
    <ligand>
        <name>Zn(2+)</name>
        <dbReference type="ChEBI" id="CHEBI:29105"/>
        <label>1</label>
    </ligand>
</feature>
<feature type="binding site" evidence="1">
    <location>
        <position position="78"/>
    </location>
    <ligand>
        <name>Zn(2+)</name>
        <dbReference type="ChEBI" id="CHEBI:29105"/>
        <label>1</label>
    </ligand>
</feature>
<feature type="binding site" evidence="1">
    <location>
        <position position="450"/>
    </location>
    <ligand>
        <name>Mg(2+)</name>
        <dbReference type="ChEBI" id="CHEBI:18420"/>
    </ligand>
</feature>
<feature type="binding site" evidence="1">
    <location>
        <position position="452"/>
    </location>
    <ligand>
        <name>Mg(2+)</name>
        <dbReference type="ChEBI" id="CHEBI:18420"/>
    </ligand>
</feature>
<feature type="binding site" evidence="1">
    <location>
        <position position="454"/>
    </location>
    <ligand>
        <name>Mg(2+)</name>
        <dbReference type="ChEBI" id="CHEBI:18420"/>
    </ligand>
</feature>
<feature type="binding site" evidence="1">
    <location>
        <position position="818"/>
    </location>
    <ligand>
        <name>Zn(2+)</name>
        <dbReference type="ChEBI" id="CHEBI:29105"/>
        <label>2</label>
    </ligand>
</feature>
<feature type="binding site" evidence="1">
    <location>
        <position position="892"/>
    </location>
    <ligand>
        <name>Zn(2+)</name>
        <dbReference type="ChEBI" id="CHEBI:29105"/>
        <label>2</label>
    </ligand>
</feature>
<feature type="binding site" evidence="1">
    <location>
        <position position="899"/>
    </location>
    <ligand>
        <name>Zn(2+)</name>
        <dbReference type="ChEBI" id="CHEBI:29105"/>
        <label>2</label>
    </ligand>
</feature>
<feature type="binding site" evidence="1">
    <location>
        <position position="902"/>
    </location>
    <ligand>
        <name>Zn(2+)</name>
        <dbReference type="ChEBI" id="CHEBI:29105"/>
        <label>2</label>
    </ligand>
</feature>
<accession>A2RML8</accession>